<sequence>MTTSTIENGASSPIIVSSSTPKLYQEGAGVWIPDQELGWIGADVIEHSETSADQVLVRTEDDREVKIPLSKVFQKNPDILEGVDDLSFLSHLHEPAILHNLHHRYNLNQIYTYIGKILIAINPYTSLPLYGKEMISAYYGKQLGTLAPHVYAVAEDAFKDMRYDGTSQSILVSGESGAGKTETTKFLLQYFAAMGNMIKESTSSSSINGINTSSDGIPVTPPPSPMKKSPVDKSVEERVLESTPLLEAFGNAKTLRNDNSSRFGKFIEIHFNEMGSIIGAKILTYLLEKSRIVRQVYNERNYHIFYQLLSGASEELKEKLNLKTIEEYSYLNKSGCFEIEGVSDEEHFNKTCHAMQVAGITLVEQENVFRILSAILLIGNFEFENIAGSNDDSCQLIDRDPLEKVSVLLGCAQPDELLNSMLTRKVVTGKESYISHNTKERAENARDSLSMFLYGMMFDWLVVKINSSMSISTQQKSKSFIGVLDIYGFESFEVNGFEQFCINYANEKLQQLFNQHVFKEEQQEYIKEKIDWSYIDFNDNQDTLDLIEKKPICILTLLDEETMFPKATPQTLATKLYSKMTSHSKFEKPRFSSTAFTINHYAGKVTYETDQFLDKNKDFIIPEQISILQRSNFSFIKVLMSHSDKFTQSPGGHPQGNGGPTSSNTKGTSGSSSMKFLSVGSQFSTSLATLMKTISTTTPHYVRCIKPNPEKLPQTFNKQDVIHQLRCGGVMESVRICCAGFPTRRLLSEFYQRYKILYVKDINTGSGGGKKGSNNNKIKDPKILVQNLLTGIELSDDKYKIGLTKVFLRAGQLASLEDMRLEQLDRSATVIQKRWKGYLYRKRYKQLRDASLIIQTKLRSVHAKQQLSALQRTHSAILIQKVWRAHRDRVQYQKIRDASLQLQTVMRRHLFSEQVHRERCENAAIILQTKIRQILSKREVDKKLRGIILIQARWRMKLAKRVYIQLRAEARSLRTVQEQKNKLQEKLEELQWRLTSEAKRKQQLEDQKVKSDTTISELSSNNDHLELQLSEIQLKYQELDKSNQSSQLQLSECLSKLEEQTQQLDHSSKLNKKLEKDLSDQHDSIEKLQSQFNETEQQLQQFKQQSEELSSKLSKTTQQLDFNKQEFDRLSQERDTDNTNNQLEIQQLKKANSTLEEDYFSLSGIRDNLERQVLELRDENQLIKERLDSLGQQSSQFQSGAALEKQQLEQLVQEQSEQLIKLSSEKLGSEEEAKKQINQLELELTDHKSKLQIQLQLTEQSNEKIKKLKGKLEEYQDEKKQLQQELERIKQSKQSVEDEKNSLITQLTTVKFESTQVSTNVSHQKEKITTLKSTIEELNKSIGKLQAEQKNKDDEIRKIQFELNDQKQQFTRQTKEFSDLQSQQSIDRQKSEITIHSLERTNETLKSDFERVQQSLKQQERDCQQYKDTINRLENEVKQLTQLKERFENEFFVAKEQNSNQTQESVYLKEVTTQMQQNQSRIERELEEKKQHITRIDDERDELKKQLTQLQQQHEQSSTQLLLAQNELERLRKKELKYKERGHETSKQQDQFNMEIQSLRITNNDQLKSLQDYEQEKKKLKDKLSSSKQEAQQQRESIIKMDAELSAIKQHSQWVENSFTDMKQRNQELIESSALYKQQLLQQTSTIDSTIKEKENEISKLQQQLETSNQQLHQLKEELNSMKQSNQLESTEQSKQLNQLIQENQQLKSVTNEISKQLDDAVFENQKINNTIKEQEIKSKRMSVELQQHIDEGKQQEIQQLQSTIAQLKQQQQSETDRLEKEIQQMKRERETQMKLVESTKLNYHMLEDRMELYRNVMEIIDYKETEWEKLARLAGCKELDTKLLSDFLLSCKLEHTSLGSQMWFHQIDYWCPYERDSSKGIFYGIIRSIVDFTIKNFDDVDLLSYLLACCSLTLFLYKKNLVKHLNGANSIMPIIPTLGDLEELNERLSHQSLTTSGKFSGGGGGGGIDFIDQLQQSTGITFGLIFKATTLKLSPLVDGAILNENYNKKLTSISASSFGSGSFGLGSNGVGSVLSIELITTYLSSIITIFQHRMVHFTLSQRFFNQVFCWIGALIMKGFMLRQTFCTETFATFVKTKIDFLTRWADDIGNVWVGDVANAFQQVREVINVLNIKDKEKIIDDKIRKQYCPTLNSNQLKQVLSLFSPGEFGGKRVSAKVIASICPPNKSSAGQSFVQDENKLNTIPIDSLHYLEIQDIKTLSLPLSIRQTIETEIINLKQQIACKK</sequence>
<reference key="1">
    <citation type="journal article" date="1996" name="J. Biol. Chem.">
        <title>The sequence of the dictyostelium myo J heavy chain gene predicts a novel, dimeric, unconventional myosin with a heavy chain molecular mass of 258 kDa.</title>
        <authorList>
            <person name="Hammer J.A. III"/>
            <person name="Jung G."/>
        </authorList>
    </citation>
    <scope>NUCLEOTIDE SEQUENCE [GENOMIC DNA]</scope>
    <source>
        <strain>AX3</strain>
    </source>
</reference>
<reference key="2">
    <citation type="journal article" date="2002" name="Nature">
        <title>Sequence and analysis of chromosome 2 of Dictyostelium discoideum.</title>
        <authorList>
            <person name="Gloeckner G."/>
            <person name="Eichinger L."/>
            <person name="Szafranski K."/>
            <person name="Pachebat J.A."/>
            <person name="Bankier A.T."/>
            <person name="Dear P.H."/>
            <person name="Lehmann R."/>
            <person name="Baumgart C."/>
            <person name="Parra G."/>
            <person name="Abril J.F."/>
            <person name="Guigo R."/>
            <person name="Kumpf K."/>
            <person name="Tunggal B."/>
            <person name="Cox E.C."/>
            <person name="Quail M.A."/>
            <person name="Platzer M."/>
            <person name="Rosenthal A."/>
            <person name="Noegel A.A."/>
        </authorList>
    </citation>
    <scope>NUCLEOTIDE SEQUENCE [LARGE SCALE GENOMIC DNA]</scope>
    <source>
        <strain>AX4</strain>
    </source>
</reference>
<reference key="3">
    <citation type="journal article" date="2005" name="Nature">
        <title>The genome of the social amoeba Dictyostelium discoideum.</title>
        <authorList>
            <person name="Eichinger L."/>
            <person name="Pachebat J.A."/>
            <person name="Gloeckner G."/>
            <person name="Rajandream M.A."/>
            <person name="Sucgang R."/>
            <person name="Berriman M."/>
            <person name="Song J."/>
            <person name="Olsen R."/>
            <person name="Szafranski K."/>
            <person name="Xu Q."/>
            <person name="Tunggal B."/>
            <person name="Kummerfeld S."/>
            <person name="Madera M."/>
            <person name="Konfortov B.A."/>
            <person name="Rivero F."/>
            <person name="Bankier A.T."/>
            <person name="Lehmann R."/>
            <person name="Hamlin N."/>
            <person name="Davies R."/>
            <person name="Gaudet P."/>
            <person name="Fey P."/>
            <person name="Pilcher K."/>
            <person name="Chen G."/>
            <person name="Saunders D."/>
            <person name="Sodergren E.J."/>
            <person name="Davis P."/>
            <person name="Kerhornou A."/>
            <person name="Nie X."/>
            <person name="Hall N."/>
            <person name="Anjard C."/>
            <person name="Hemphill L."/>
            <person name="Bason N."/>
            <person name="Farbrother P."/>
            <person name="Desany B."/>
            <person name="Just E."/>
            <person name="Morio T."/>
            <person name="Rost R."/>
            <person name="Churcher C.M."/>
            <person name="Cooper J."/>
            <person name="Haydock S."/>
            <person name="van Driessche N."/>
            <person name="Cronin A."/>
            <person name="Goodhead I."/>
            <person name="Muzny D.M."/>
            <person name="Mourier T."/>
            <person name="Pain A."/>
            <person name="Lu M."/>
            <person name="Harper D."/>
            <person name="Lindsay R."/>
            <person name="Hauser H."/>
            <person name="James K.D."/>
            <person name="Quiles M."/>
            <person name="Madan Babu M."/>
            <person name="Saito T."/>
            <person name="Buchrieser C."/>
            <person name="Wardroper A."/>
            <person name="Felder M."/>
            <person name="Thangavelu M."/>
            <person name="Johnson D."/>
            <person name="Knights A."/>
            <person name="Loulseged H."/>
            <person name="Mungall K.L."/>
            <person name="Oliver K."/>
            <person name="Price C."/>
            <person name="Quail M.A."/>
            <person name="Urushihara H."/>
            <person name="Hernandez J."/>
            <person name="Rabbinowitsch E."/>
            <person name="Steffen D."/>
            <person name="Sanders M."/>
            <person name="Ma J."/>
            <person name="Kohara Y."/>
            <person name="Sharp S."/>
            <person name="Simmonds M.N."/>
            <person name="Spiegler S."/>
            <person name="Tivey A."/>
            <person name="Sugano S."/>
            <person name="White B."/>
            <person name="Walker D."/>
            <person name="Woodward J.R."/>
            <person name="Winckler T."/>
            <person name="Tanaka Y."/>
            <person name="Shaulsky G."/>
            <person name="Schleicher M."/>
            <person name="Weinstock G.M."/>
            <person name="Rosenthal A."/>
            <person name="Cox E.C."/>
            <person name="Chisholm R.L."/>
            <person name="Gibbs R.A."/>
            <person name="Loomis W.F."/>
            <person name="Platzer M."/>
            <person name="Kay R.R."/>
            <person name="Williams J.G."/>
            <person name="Dear P.H."/>
            <person name="Noegel A.A."/>
            <person name="Barrell B.G."/>
            <person name="Kuspa A."/>
        </authorList>
    </citation>
    <scope>NUCLEOTIDE SEQUENCE [LARGE SCALE GENOMIC DNA]</scope>
    <source>
        <strain>AX4</strain>
    </source>
</reference>
<reference key="4">
    <citation type="journal article" date="1996" name="J. Muscle Res. Cell Motil.">
        <title>Dictyostelium discoideum myoJ: a member of a broadly defined myosin V class or a class XI unconventional myosin?</title>
        <authorList>
            <person name="Peterson M.D."/>
            <person name="Urioste A.S."/>
            <person name="Titus M.A."/>
        </authorList>
    </citation>
    <scope>NUCLEOTIDE SEQUENCE [GENOMIC DNA] OF 1-1021</scope>
</reference>
<reference key="5">
    <citation type="journal article" date="1994" name="Proc. Natl. Acad. Sci. U.S.A.">
        <title>Discovery of myosin genes by physical mapping in Dictyostelium.</title>
        <authorList>
            <person name="Titus M.A."/>
            <person name="Kuspa A."/>
            <person name="Loomis W.F."/>
        </authorList>
    </citation>
    <scope>NUCLEOTIDE SEQUENCE [GENOMIC DNA] OF 182-298</scope>
</reference>
<reference key="6">
    <citation type="journal article" date="2006" name="BMC Genomics">
        <title>Thirteen is enough: the myosins of Dictyostelium discoideum and their light chains.</title>
        <authorList>
            <person name="Kollmar M."/>
        </authorList>
    </citation>
    <scope>NOMENCLATURE</scope>
</reference>
<reference key="7">
    <citation type="journal article" date="2008" name="J. Biol. Chem.">
        <title>Dictyostelium myosin-5b is a conditional processive motor.</title>
        <authorList>
            <person name="Taft M.H."/>
            <person name="Hartmann F.K."/>
            <person name="Rump A."/>
            <person name="Keller H."/>
            <person name="Chizhov I."/>
            <person name="Manstein D.J."/>
            <person name="Tsiavaliaris G."/>
        </authorList>
    </citation>
    <scope>FUNCTION</scope>
    <scope>SUBCELLULAR LOCATION</scope>
</reference>
<dbReference type="EMBL" id="U42409">
    <property type="protein sequence ID" value="AAA85186.1"/>
    <property type="molecule type" value="Genomic_DNA"/>
</dbReference>
<dbReference type="EMBL" id="AAFI02000008">
    <property type="protein sequence ID" value="EAL71208.1"/>
    <property type="molecule type" value="Genomic_DNA"/>
</dbReference>
<dbReference type="EMBL" id="L35322">
    <property type="protein sequence ID" value="AAA79858.1"/>
    <property type="molecule type" value="Genomic_DNA"/>
</dbReference>
<dbReference type="PIR" id="T18278">
    <property type="entry name" value="T18278"/>
</dbReference>
<dbReference type="RefSeq" id="XP_645195.1">
    <property type="nucleotide sequence ID" value="XM_640103.1"/>
</dbReference>
<dbReference type="SMR" id="P54697"/>
<dbReference type="FunCoup" id="P54697">
    <property type="interactions" value="180"/>
</dbReference>
<dbReference type="STRING" id="44689.P54697"/>
<dbReference type="BindingDB" id="P54697"/>
<dbReference type="ChEMBL" id="CHEMBL1781867"/>
<dbReference type="GlyGen" id="P54697">
    <property type="glycosylation" value="2 sites"/>
</dbReference>
<dbReference type="PaxDb" id="44689-DDB0185050"/>
<dbReference type="EnsemblProtists" id="EAL71208">
    <property type="protein sequence ID" value="EAL71208"/>
    <property type="gene ID" value="DDB_G0272112"/>
</dbReference>
<dbReference type="GeneID" id="8618367"/>
<dbReference type="KEGG" id="ddi:DDB_G0272112"/>
<dbReference type="dictyBase" id="DDB_G0272112">
    <property type="gene designation" value="myoJ"/>
</dbReference>
<dbReference type="VEuPathDB" id="AmoebaDB:DDB_G0272112"/>
<dbReference type="eggNOG" id="KOG0160">
    <property type="taxonomic scope" value="Eukaryota"/>
</dbReference>
<dbReference type="HOGENOM" id="CLU_000192_3_1_1"/>
<dbReference type="InParanoid" id="P54697"/>
<dbReference type="OMA" id="TEKMECY"/>
<dbReference type="PhylomeDB" id="P54697"/>
<dbReference type="Reactome" id="R-DDI-9013418">
    <property type="pathway name" value="RHOBTB2 GTPase cycle"/>
</dbReference>
<dbReference type="Reactome" id="R-DDI-9013419">
    <property type="pathway name" value="RHOT2 GTPase cycle"/>
</dbReference>
<dbReference type="Reactome" id="R-DDI-9013420">
    <property type="pathway name" value="RHOU GTPase cycle"/>
</dbReference>
<dbReference type="Reactome" id="R-DDI-9013422">
    <property type="pathway name" value="RHOBTB1 GTPase cycle"/>
</dbReference>
<dbReference type="Reactome" id="R-DDI-9013425">
    <property type="pathway name" value="RHOT1 GTPase cycle"/>
</dbReference>
<dbReference type="PRO" id="PR:P54697"/>
<dbReference type="Proteomes" id="UP000002195">
    <property type="component" value="Chromosome 2"/>
</dbReference>
<dbReference type="GO" id="GO:0015629">
    <property type="term" value="C:actin cytoskeleton"/>
    <property type="evidence" value="ECO:0000318"/>
    <property type="project" value="GO_Central"/>
</dbReference>
<dbReference type="GO" id="GO:0042641">
    <property type="term" value="C:actomyosin"/>
    <property type="evidence" value="ECO:0000314"/>
    <property type="project" value="dictyBase"/>
</dbReference>
<dbReference type="GO" id="GO:0000331">
    <property type="term" value="C:contractile vacuole"/>
    <property type="evidence" value="ECO:0000314"/>
    <property type="project" value="dictyBase"/>
</dbReference>
<dbReference type="GO" id="GO:0005737">
    <property type="term" value="C:cytoplasm"/>
    <property type="evidence" value="ECO:0000318"/>
    <property type="project" value="GO_Central"/>
</dbReference>
<dbReference type="GO" id="GO:0016020">
    <property type="term" value="C:membrane"/>
    <property type="evidence" value="ECO:0000318"/>
    <property type="project" value="GO_Central"/>
</dbReference>
<dbReference type="GO" id="GO:0016459">
    <property type="term" value="C:myosin complex"/>
    <property type="evidence" value="ECO:0007669"/>
    <property type="project" value="UniProtKB-KW"/>
</dbReference>
<dbReference type="GO" id="GO:0051015">
    <property type="term" value="F:actin filament binding"/>
    <property type="evidence" value="ECO:0000314"/>
    <property type="project" value="dictyBase"/>
</dbReference>
<dbReference type="GO" id="GO:0043531">
    <property type="term" value="F:ADP binding"/>
    <property type="evidence" value="ECO:0000314"/>
    <property type="project" value="dictyBase"/>
</dbReference>
<dbReference type="GO" id="GO:0005524">
    <property type="term" value="F:ATP binding"/>
    <property type="evidence" value="ECO:0000314"/>
    <property type="project" value="dictyBase"/>
</dbReference>
<dbReference type="GO" id="GO:0005516">
    <property type="term" value="F:calmodulin binding"/>
    <property type="evidence" value="ECO:0007669"/>
    <property type="project" value="UniProtKB-KW"/>
</dbReference>
<dbReference type="GO" id="GO:0000146">
    <property type="term" value="F:microfilament motor activity"/>
    <property type="evidence" value="ECO:0000314"/>
    <property type="project" value="dictyBase"/>
</dbReference>
<dbReference type="GO" id="GO:0007015">
    <property type="term" value="P:actin filament organization"/>
    <property type="evidence" value="ECO:0000318"/>
    <property type="project" value="GO_Central"/>
</dbReference>
<dbReference type="GO" id="GO:0033275">
    <property type="term" value="P:actin-myosin filament sliding"/>
    <property type="evidence" value="ECO:0000314"/>
    <property type="project" value="dictyBase"/>
</dbReference>
<dbReference type="GO" id="GO:0140027">
    <property type="term" value="P:contractile vacuole localization"/>
    <property type="evidence" value="ECO:0000315"/>
    <property type="project" value="dictyBase"/>
</dbReference>
<dbReference type="GO" id="GO:0006897">
    <property type="term" value="P:endocytosis"/>
    <property type="evidence" value="ECO:0000318"/>
    <property type="project" value="GO_Central"/>
</dbReference>
<dbReference type="CDD" id="cd23767">
    <property type="entry name" value="IQCD"/>
    <property type="match status" value="1"/>
</dbReference>
<dbReference type="CDD" id="cd00124">
    <property type="entry name" value="MYSc"/>
    <property type="match status" value="1"/>
</dbReference>
<dbReference type="FunFam" id="1.20.5.190:FF:000106">
    <property type="match status" value="2"/>
</dbReference>
<dbReference type="FunFam" id="1.10.10.820:FF:000001">
    <property type="entry name" value="Myosin heavy chain"/>
    <property type="match status" value="1"/>
</dbReference>
<dbReference type="Gene3D" id="1.10.10.820">
    <property type="match status" value="1"/>
</dbReference>
<dbReference type="Gene3D" id="1.20.5.190">
    <property type="match status" value="2"/>
</dbReference>
<dbReference type="Gene3D" id="1.20.58.530">
    <property type="match status" value="1"/>
</dbReference>
<dbReference type="Gene3D" id="6.20.240.20">
    <property type="match status" value="1"/>
</dbReference>
<dbReference type="Gene3D" id="3.40.850.10">
    <property type="entry name" value="Kinesin motor domain"/>
    <property type="match status" value="1"/>
</dbReference>
<dbReference type="Gene3D" id="1.20.120.720">
    <property type="entry name" value="Myosin VI head, motor domain, U50 subdomain"/>
    <property type="match status" value="1"/>
</dbReference>
<dbReference type="InterPro" id="IPR002710">
    <property type="entry name" value="Dilute_dom"/>
</dbReference>
<dbReference type="InterPro" id="IPR000048">
    <property type="entry name" value="IQ_motif_EF-hand-BS"/>
</dbReference>
<dbReference type="InterPro" id="IPR036961">
    <property type="entry name" value="Kinesin_motor_dom_sf"/>
</dbReference>
<dbReference type="InterPro" id="IPR001609">
    <property type="entry name" value="Myosin_head_motor_dom-like"/>
</dbReference>
<dbReference type="InterPro" id="IPR004009">
    <property type="entry name" value="Myosin_N"/>
</dbReference>
<dbReference type="InterPro" id="IPR027417">
    <property type="entry name" value="P-loop_NTPase"/>
</dbReference>
<dbReference type="PANTHER" id="PTHR13140:SF706">
    <property type="entry name" value="DILUTE CLASS UNCONVENTIONAL MYOSIN, ISOFORM C"/>
    <property type="match status" value="1"/>
</dbReference>
<dbReference type="PANTHER" id="PTHR13140">
    <property type="entry name" value="MYOSIN"/>
    <property type="match status" value="1"/>
</dbReference>
<dbReference type="Pfam" id="PF01843">
    <property type="entry name" value="DIL"/>
    <property type="match status" value="1"/>
</dbReference>
<dbReference type="Pfam" id="PF00612">
    <property type="entry name" value="IQ"/>
    <property type="match status" value="3"/>
</dbReference>
<dbReference type="Pfam" id="PF00063">
    <property type="entry name" value="Myosin_head"/>
    <property type="match status" value="1"/>
</dbReference>
<dbReference type="PRINTS" id="PR00193">
    <property type="entry name" value="MYOSINHEAVY"/>
</dbReference>
<dbReference type="SMART" id="SM01132">
    <property type="entry name" value="DIL"/>
    <property type="match status" value="1"/>
</dbReference>
<dbReference type="SMART" id="SM00015">
    <property type="entry name" value="IQ"/>
    <property type="match status" value="3"/>
</dbReference>
<dbReference type="SMART" id="SM00242">
    <property type="entry name" value="MYSc"/>
    <property type="match status" value="1"/>
</dbReference>
<dbReference type="SUPFAM" id="SSF52540">
    <property type="entry name" value="P-loop containing nucleoside triphosphate hydrolases"/>
    <property type="match status" value="2"/>
</dbReference>
<dbReference type="PROSITE" id="PS51126">
    <property type="entry name" value="DILUTE"/>
    <property type="match status" value="1"/>
</dbReference>
<dbReference type="PROSITE" id="PS50096">
    <property type="entry name" value="IQ"/>
    <property type="match status" value="3"/>
</dbReference>
<dbReference type="PROSITE" id="PS51456">
    <property type="entry name" value="MYOSIN_MOTOR"/>
    <property type="match status" value="1"/>
</dbReference>
<dbReference type="PROSITE" id="PS51844">
    <property type="entry name" value="SH3_LIKE"/>
    <property type="match status" value="1"/>
</dbReference>
<comment type="function">
    <text evidence="7">Processive motor protein that can move over long distances along F-actin without disassociating; processiveness depends on high physiological Mg(2+) concentrations. Presents a high actin affinity in the presence of ADP, fast ATP hydrolysis, and a high steady-state ATPase activity in the presence of actin that is rate limited by ADP release. Physiological decrease of free Mg(2+) ions leads to an increased rate of ADP release and shortening of the fraction of time it spends in the strong acting binding states.</text>
</comment>
<comment type="subunit">
    <text>Homodimer that associates with six light chains.</text>
</comment>
<comment type="subcellular location">
    <subcellularLocation>
        <location evidence="7">Contractile vacuole</location>
    </subcellularLocation>
</comment>
<comment type="similarity">
    <text evidence="8">Belongs to the TRAFAC class myosin-kinesin ATPase superfamily. Myosin family.</text>
</comment>
<gene>
    <name type="primary">myoJ</name>
    <name type="synonym">myo5B</name>
    <name type="ORF">DDB_G0272112</name>
</gene>
<keyword id="KW-0009">Actin-binding</keyword>
<keyword id="KW-0067">ATP-binding</keyword>
<keyword id="KW-0112">Calmodulin-binding</keyword>
<keyword id="KW-0175">Coiled coil</keyword>
<keyword id="KW-0505">Motor protein</keyword>
<keyword id="KW-0518">Myosin</keyword>
<keyword id="KW-0547">Nucleotide-binding</keyword>
<keyword id="KW-1185">Reference proteome</keyword>
<keyword id="KW-0677">Repeat</keyword>
<keyword id="KW-0926">Vacuole</keyword>
<protein>
    <recommendedName>
        <fullName>Myosin-J heavy chain</fullName>
    </recommendedName>
    <alternativeName>
        <fullName>Myosin-5b</fullName>
    </alternativeName>
</protein>
<evidence type="ECO:0000255" key="1"/>
<evidence type="ECO:0000255" key="2">
    <source>
        <dbReference type="PROSITE-ProRule" id="PRU00116"/>
    </source>
</evidence>
<evidence type="ECO:0000255" key="3">
    <source>
        <dbReference type="PROSITE-ProRule" id="PRU00503"/>
    </source>
</evidence>
<evidence type="ECO:0000255" key="4">
    <source>
        <dbReference type="PROSITE-ProRule" id="PRU00782"/>
    </source>
</evidence>
<evidence type="ECO:0000255" key="5">
    <source>
        <dbReference type="PROSITE-ProRule" id="PRU01190"/>
    </source>
</evidence>
<evidence type="ECO:0000256" key="6">
    <source>
        <dbReference type="SAM" id="MobiDB-lite"/>
    </source>
</evidence>
<evidence type="ECO:0000269" key="7">
    <source>
    </source>
</evidence>
<evidence type="ECO:0000305" key="8"/>
<accession>P54697</accession>
<accession>Q559Y9</accession>
<accession>Q86A36</accession>
<feature type="chain" id="PRO_0000123372" description="Myosin-J heavy chain">
    <location>
        <begin position="1"/>
        <end position="2245"/>
    </location>
</feature>
<feature type="domain" description="Myosin N-terminal SH3-like" evidence="5">
    <location>
        <begin position="25"/>
        <end position="77"/>
    </location>
</feature>
<feature type="domain" description="Myosin motor" evidence="4">
    <location>
        <begin position="81"/>
        <end position="821"/>
    </location>
</feature>
<feature type="domain" description="IQ 1" evidence="2">
    <location>
        <begin position="824"/>
        <end position="851"/>
    </location>
</feature>
<feature type="domain" description="IQ 2" evidence="2">
    <location>
        <begin position="872"/>
        <end position="901"/>
    </location>
</feature>
<feature type="domain" description="IQ 3" evidence="2">
    <location>
        <begin position="943"/>
        <end position="972"/>
    </location>
</feature>
<feature type="domain" description="Dilute" evidence="3">
    <location>
        <begin position="1969"/>
        <end position="2188"/>
    </location>
</feature>
<feature type="region of interest" description="Disordered" evidence="6">
    <location>
        <begin position="646"/>
        <end position="672"/>
    </location>
</feature>
<feature type="region of interest" description="Actin-binding">
    <location>
        <begin position="669"/>
        <end position="749"/>
    </location>
</feature>
<feature type="region of interest" description="Disordered" evidence="6">
    <location>
        <begin position="1504"/>
        <end position="1524"/>
    </location>
</feature>
<feature type="coiled-coil region" evidence="1">
    <location>
        <begin position="973"/>
        <end position="1812"/>
    </location>
</feature>
<feature type="compositionally biased region" description="Low complexity" evidence="6">
    <location>
        <begin position="660"/>
        <end position="672"/>
    </location>
</feature>
<feature type="compositionally biased region" description="Low complexity" evidence="6">
    <location>
        <begin position="1506"/>
        <end position="1523"/>
    </location>
</feature>
<feature type="binding site" evidence="1">
    <location>
        <begin position="174"/>
        <end position="181"/>
    </location>
    <ligand>
        <name>ATP</name>
        <dbReference type="ChEBI" id="CHEBI:30616"/>
    </ligand>
</feature>
<feature type="sequence conflict" description="In Ref. 1; AAA85186." evidence="8" ref="1">
    <original>F</original>
    <variation>L</variation>
    <location>
        <position position="191"/>
    </location>
</feature>
<feature type="sequence conflict" description="In Ref. 1; AAA85186." evidence="8" ref="1">
    <original>T</original>
    <variation>A</variation>
    <location>
        <position position="284"/>
    </location>
</feature>
<feature type="sequence conflict" description="In Ref. 1; AAA85186." evidence="8" ref="1">
    <original>R</original>
    <variation>G</variation>
    <location>
        <position position="291"/>
    </location>
</feature>
<feature type="sequence conflict" description="In Ref. 4; AAA79858." evidence="8" ref="4">
    <original>NKSGCFEIEGVSDEEH</original>
    <variation>IEWMFELKVYRMKS</variation>
    <location>
        <begin position="332"/>
        <end position="347"/>
    </location>
</feature>
<feature type="sequence conflict" description="In Ref. 1; AAA85186." evidence="8" ref="1">
    <original>K</original>
    <variation>N</variation>
    <location>
        <position position="550"/>
    </location>
</feature>
<feature type="sequence conflict" description="In Ref. 1; AAA85186." evidence="8" ref="1">
    <original>QQ</original>
    <variation>HH</variation>
    <location>
        <begin position="865"/>
        <end position="866"/>
    </location>
</feature>
<feature type="sequence conflict" description="In Ref. 1; AAA85186." evidence="8" ref="1">
    <original>K</original>
    <variation>N</variation>
    <location>
        <position position="1041"/>
    </location>
</feature>
<feature type="sequence conflict" description="In Ref. 1; AAA85186." evidence="8" ref="1">
    <original>Q</original>
    <variation>P</variation>
    <location>
        <position position="1389"/>
    </location>
</feature>
<name>MYOJ_DICDI</name>
<organism>
    <name type="scientific">Dictyostelium discoideum</name>
    <name type="common">Social amoeba</name>
    <dbReference type="NCBI Taxonomy" id="44689"/>
    <lineage>
        <taxon>Eukaryota</taxon>
        <taxon>Amoebozoa</taxon>
        <taxon>Evosea</taxon>
        <taxon>Eumycetozoa</taxon>
        <taxon>Dictyostelia</taxon>
        <taxon>Dictyosteliales</taxon>
        <taxon>Dictyosteliaceae</taxon>
        <taxon>Dictyostelium</taxon>
    </lineage>
</organism>
<proteinExistence type="inferred from homology"/>